<sequence>MAEDDMVSLLFKLKVEDVTCSDDPEKHMKNASNERKPLIEPVENQLMDIGEEGGSLDYWLLYLYVDCLTMMCCFHRGSLPYNWMQGALLTNLPSYQHDVTLDEVNRGLKSASDFFGYVDPMRSDYFTAFSFPGRVTKLNEQMELTSTKGRCLKFDLYASTQLRFKPGELVRHGECKFAIG</sequence>
<accession>H6QW39</accession>
<gene>
    <name type="primary">ROLC1</name>
</gene>
<proteinExistence type="inferred from homology"/>
<protein>
    <recommendedName>
        <fullName>Cytokinin-beta-glucosidase 1</fullName>
        <ecNumber>3.2.1.-</ecNumber>
    </recommendedName>
    <alternativeName>
        <fullName>Protein ROL C 1</fullName>
    </alternativeName>
</protein>
<feature type="chain" id="PRO_0000421063" description="Cytokinin-beta-glucosidase 1">
    <location>
        <begin position="1"/>
        <end position="180"/>
    </location>
</feature>
<name>ROLC1_LINVU</name>
<comment type="function">
    <text evidence="1">Hydrolyzes cytokinin glucosides thus liberating free cytokinins.</text>
</comment>
<dbReference type="EC" id="3.2.1.-"/>
<dbReference type="EMBL" id="EU735069">
    <property type="protein sequence ID" value="AFA43818.1"/>
    <property type="molecule type" value="Genomic_DNA"/>
</dbReference>
<dbReference type="GO" id="GO:0008422">
    <property type="term" value="F:beta-glucosidase activity"/>
    <property type="evidence" value="ECO:0007669"/>
    <property type="project" value="InterPro"/>
</dbReference>
<dbReference type="GO" id="GO:0005975">
    <property type="term" value="P:carbohydrate metabolic process"/>
    <property type="evidence" value="ECO:0007669"/>
    <property type="project" value="InterPro"/>
</dbReference>
<dbReference type="GO" id="GO:0009691">
    <property type="term" value="P:cytokinin biosynthetic process"/>
    <property type="evidence" value="ECO:0007669"/>
    <property type="project" value="UniProtKB-KW"/>
</dbReference>
<dbReference type="InterPro" id="IPR006065">
    <property type="entry name" value="Glyco_hydro_41"/>
</dbReference>
<dbReference type="PRINTS" id="PR00746">
    <property type="entry name" value="GLHYDRLASE41"/>
</dbReference>
<keyword id="KW-0203">Cytokinin biosynthesis</keyword>
<keyword id="KW-0326">Glycosidase</keyword>
<keyword id="KW-0378">Hydrolase</keyword>
<organism>
    <name type="scientific">Linaria vulgaris</name>
    <name type="common">Toadflax</name>
    <dbReference type="NCBI Taxonomy" id="43171"/>
    <lineage>
        <taxon>Eukaryota</taxon>
        <taxon>Viridiplantae</taxon>
        <taxon>Streptophyta</taxon>
        <taxon>Embryophyta</taxon>
        <taxon>Tracheophyta</taxon>
        <taxon>Spermatophyta</taxon>
        <taxon>Magnoliopsida</taxon>
        <taxon>eudicotyledons</taxon>
        <taxon>Gunneridae</taxon>
        <taxon>Pentapetalae</taxon>
        <taxon>asterids</taxon>
        <taxon>lamiids</taxon>
        <taxon>Lamiales</taxon>
        <taxon>Plantaginaceae</taxon>
        <taxon>Antirrhineae</taxon>
        <taxon>Linaria</taxon>
    </lineage>
</organism>
<reference key="1">
    <citation type="submission" date="2011-02" db="EMBL/GenBank/DDBJ databases">
        <title>Linaria vulgaris contains T-DNA from Agrobacterium rhizogenes.</title>
        <authorList>
            <person name="Matveeva T.V."/>
            <person name="Bogomaz D.I."/>
            <person name="Pavlova O.A."/>
            <person name="Nester E.W."/>
            <person name="Lutova L.A."/>
        </authorList>
    </citation>
    <scope>NUCLEOTIDE SEQUENCE [GENOMIC DNA]</scope>
</reference>
<evidence type="ECO:0000250" key="1"/>